<accession>Q96KW2</accession>
<accession>C9J1I7</accession>
<dbReference type="EMBL" id="AL021808">
    <property type="status" value="NOT_ANNOTATED_CDS"/>
    <property type="molecule type" value="Genomic_DNA"/>
</dbReference>
<dbReference type="CCDS" id="CCDS59497.1"/>
<dbReference type="RefSeq" id="NP_258443.2">
    <property type="nucleotide sequence ID" value="NM_033482.4"/>
</dbReference>
<dbReference type="FunCoup" id="Q96KW2">
    <property type="interactions" value="125"/>
</dbReference>
<dbReference type="STRING" id="9606.ENSP00000392726"/>
<dbReference type="GlyGen" id="Q96KW2">
    <property type="glycosylation" value="4 sites, 1 O-linked glycan (2 sites)"/>
</dbReference>
<dbReference type="iPTMnet" id="Q96KW2"/>
<dbReference type="PhosphoSitePlus" id="Q96KW2"/>
<dbReference type="BioMuta" id="POM121L2"/>
<dbReference type="DMDM" id="74751990"/>
<dbReference type="MassIVE" id="Q96KW2"/>
<dbReference type="PaxDb" id="9606-ENSP00000392726"/>
<dbReference type="PeptideAtlas" id="Q96KW2"/>
<dbReference type="Antibodypedia" id="49628">
    <property type="antibodies" value="8 antibodies from 7 providers"/>
</dbReference>
<dbReference type="DNASU" id="94026"/>
<dbReference type="Ensembl" id="ENST00000444565.2">
    <property type="protein sequence ID" value="ENSP00000392726.1"/>
    <property type="gene ID" value="ENSG00000158553.5"/>
</dbReference>
<dbReference type="GeneID" id="94026"/>
<dbReference type="KEGG" id="hsa:94026"/>
<dbReference type="MANE-Select" id="ENST00000444565.2">
    <property type="protein sequence ID" value="ENSP00000392726.1"/>
    <property type="RefSeq nucleotide sequence ID" value="NM_033482.4"/>
    <property type="RefSeq protein sequence ID" value="NP_258443.2"/>
</dbReference>
<dbReference type="UCSC" id="uc011dku.2">
    <property type="organism name" value="human"/>
</dbReference>
<dbReference type="AGR" id="HGNC:13973"/>
<dbReference type="CTD" id="94026"/>
<dbReference type="DisGeNET" id="94026"/>
<dbReference type="GeneCards" id="POM121L2"/>
<dbReference type="HGNC" id="HGNC:13973">
    <property type="gene designation" value="POM121L2"/>
</dbReference>
<dbReference type="HPA" id="ENSG00000158553">
    <property type="expression patterns" value="Tissue enriched (testis)"/>
</dbReference>
<dbReference type="neXtProt" id="NX_Q96KW2"/>
<dbReference type="OpenTargets" id="ENSG00000158553"/>
<dbReference type="PharmGKB" id="PA33524"/>
<dbReference type="VEuPathDB" id="HostDB:ENSG00000158553"/>
<dbReference type="eggNOG" id="ENOG502RWWZ">
    <property type="taxonomic scope" value="Eukaryota"/>
</dbReference>
<dbReference type="GeneTree" id="ENSGT00940000153253"/>
<dbReference type="HOGENOM" id="CLU_011366_0_1_1"/>
<dbReference type="InParanoid" id="Q96KW2"/>
<dbReference type="OMA" id="TIWSLRH"/>
<dbReference type="OrthoDB" id="9629416at2759"/>
<dbReference type="PAN-GO" id="Q96KW2">
    <property type="GO annotations" value="5 GO annotations based on evolutionary models"/>
</dbReference>
<dbReference type="PhylomeDB" id="Q96KW2"/>
<dbReference type="TreeFam" id="TF350673"/>
<dbReference type="PathwayCommons" id="Q96KW2"/>
<dbReference type="BioGRID-ORCS" id="94026">
    <property type="hits" value="4 hits in 1129 CRISPR screens"/>
</dbReference>
<dbReference type="ChiTaRS" id="POM121L2">
    <property type="organism name" value="human"/>
</dbReference>
<dbReference type="GenomeRNAi" id="94026"/>
<dbReference type="Pharos" id="Q96KW2">
    <property type="development level" value="Tdark"/>
</dbReference>
<dbReference type="PRO" id="PR:Q96KW2"/>
<dbReference type="Proteomes" id="UP000005640">
    <property type="component" value="Chromosome 6"/>
</dbReference>
<dbReference type="RNAct" id="Q96KW2">
    <property type="molecule type" value="protein"/>
</dbReference>
<dbReference type="Bgee" id="ENSG00000158553">
    <property type="expression patterns" value="Expressed in left testis and 12 other cell types or tissues"/>
</dbReference>
<dbReference type="ExpressionAtlas" id="Q96KW2">
    <property type="expression patterns" value="baseline and differential"/>
</dbReference>
<dbReference type="GO" id="GO:0005643">
    <property type="term" value="C:nuclear pore"/>
    <property type="evidence" value="ECO:0000318"/>
    <property type="project" value="GO_Central"/>
</dbReference>
<dbReference type="GO" id="GO:0008139">
    <property type="term" value="F:nuclear localization sequence binding"/>
    <property type="evidence" value="ECO:0000318"/>
    <property type="project" value="GO_Central"/>
</dbReference>
<dbReference type="GO" id="GO:0017056">
    <property type="term" value="F:structural constituent of nuclear pore"/>
    <property type="evidence" value="ECO:0000318"/>
    <property type="project" value="GO_Central"/>
</dbReference>
<dbReference type="GO" id="GO:0006606">
    <property type="term" value="P:protein import into nucleus"/>
    <property type="evidence" value="ECO:0000318"/>
    <property type="project" value="GO_Central"/>
</dbReference>
<dbReference type="GO" id="GO:0006405">
    <property type="term" value="P:RNA export from nucleus"/>
    <property type="evidence" value="ECO:0000318"/>
    <property type="project" value="GO_Central"/>
</dbReference>
<dbReference type="InterPro" id="IPR026054">
    <property type="entry name" value="Nucleoporin"/>
</dbReference>
<dbReference type="PANTHER" id="PTHR23193">
    <property type="entry name" value="NUCLEAR PORE COMPLEX PROTEIN NUP"/>
    <property type="match status" value="1"/>
</dbReference>
<dbReference type="PANTHER" id="PTHR23193:SF20">
    <property type="entry name" value="POM121-LIKE PROTEIN 2"/>
    <property type="match status" value="1"/>
</dbReference>
<dbReference type="Pfam" id="PF15229">
    <property type="entry name" value="POM121"/>
    <property type="match status" value="2"/>
</dbReference>
<organism>
    <name type="scientific">Homo sapiens</name>
    <name type="common">Human</name>
    <dbReference type="NCBI Taxonomy" id="9606"/>
    <lineage>
        <taxon>Eukaryota</taxon>
        <taxon>Metazoa</taxon>
        <taxon>Chordata</taxon>
        <taxon>Craniata</taxon>
        <taxon>Vertebrata</taxon>
        <taxon>Euteleostomi</taxon>
        <taxon>Mammalia</taxon>
        <taxon>Eutheria</taxon>
        <taxon>Euarchontoglires</taxon>
        <taxon>Primates</taxon>
        <taxon>Haplorrhini</taxon>
        <taxon>Catarrhini</taxon>
        <taxon>Hominidae</taxon>
        <taxon>Homo</taxon>
    </lineage>
</organism>
<proteinExistence type="evidence at protein level"/>
<keyword id="KW-1267">Proteomics identification</keyword>
<keyword id="KW-1185">Reference proteome</keyword>
<evidence type="ECO:0000256" key="1">
    <source>
        <dbReference type="SAM" id="MobiDB-lite"/>
    </source>
</evidence>
<evidence type="ECO:0000305" key="2"/>
<protein>
    <recommendedName>
        <fullName>POM121-like protein 2</fullName>
    </recommendedName>
</protein>
<reference key="1">
    <citation type="journal article" date="2003" name="Nature">
        <title>The DNA sequence and analysis of human chromosome 6.</title>
        <authorList>
            <person name="Mungall A.J."/>
            <person name="Palmer S.A."/>
            <person name="Sims S.K."/>
            <person name="Edwards C.A."/>
            <person name="Ashurst J.L."/>
            <person name="Wilming L."/>
            <person name="Jones M.C."/>
            <person name="Horton R."/>
            <person name="Hunt S.E."/>
            <person name="Scott C.E."/>
            <person name="Gilbert J.G.R."/>
            <person name="Clamp M.E."/>
            <person name="Bethel G."/>
            <person name="Milne S."/>
            <person name="Ainscough R."/>
            <person name="Almeida J.P."/>
            <person name="Ambrose K.D."/>
            <person name="Andrews T.D."/>
            <person name="Ashwell R.I.S."/>
            <person name="Babbage A.K."/>
            <person name="Bagguley C.L."/>
            <person name="Bailey J."/>
            <person name="Banerjee R."/>
            <person name="Barker D.J."/>
            <person name="Barlow K.F."/>
            <person name="Bates K."/>
            <person name="Beare D.M."/>
            <person name="Beasley H."/>
            <person name="Beasley O."/>
            <person name="Bird C.P."/>
            <person name="Blakey S.E."/>
            <person name="Bray-Allen S."/>
            <person name="Brook J."/>
            <person name="Brown A.J."/>
            <person name="Brown J.Y."/>
            <person name="Burford D.C."/>
            <person name="Burrill W."/>
            <person name="Burton J."/>
            <person name="Carder C."/>
            <person name="Carter N.P."/>
            <person name="Chapman J.C."/>
            <person name="Clark S.Y."/>
            <person name="Clark G."/>
            <person name="Clee C.M."/>
            <person name="Clegg S."/>
            <person name="Cobley V."/>
            <person name="Collier R.E."/>
            <person name="Collins J.E."/>
            <person name="Colman L.K."/>
            <person name="Corby N.R."/>
            <person name="Coville G.J."/>
            <person name="Culley K.M."/>
            <person name="Dhami P."/>
            <person name="Davies J."/>
            <person name="Dunn M."/>
            <person name="Earthrowl M.E."/>
            <person name="Ellington A.E."/>
            <person name="Evans K.A."/>
            <person name="Faulkner L."/>
            <person name="Francis M.D."/>
            <person name="Frankish A."/>
            <person name="Frankland J."/>
            <person name="French L."/>
            <person name="Garner P."/>
            <person name="Garnett J."/>
            <person name="Ghori M.J."/>
            <person name="Gilby L.M."/>
            <person name="Gillson C.J."/>
            <person name="Glithero R.J."/>
            <person name="Grafham D.V."/>
            <person name="Grant M."/>
            <person name="Gribble S."/>
            <person name="Griffiths C."/>
            <person name="Griffiths M.N.D."/>
            <person name="Hall R."/>
            <person name="Halls K.S."/>
            <person name="Hammond S."/>
            <person name="Harley J.L."/>
            <person name="Hart E.A."/>
            <person name="Heath P.D."/>
            <person name="Heathcott R."/>
            <person name="Holmes S.J."/>
            <person name="Howden P.J."/>
            <person name="Howe K.L."/>
            <person name="Howell G.R."/>
            <person name="Huckle E."/>
            <person name="Humphray S.J."/>
            <person name="Humphries M.D."/>
            <person name="Hunt A.R."/>
            <person name="Johnson C.M."/>
            <person name="Joy A.A."/>
            <person name="Kay M."/>
            <person name="Keenan S.J."/>
            <person name="Kimberley A.M."/>
            <person name="King A."/>
            <person name="Laird G.K."/>
            <person name="Langford C."/>
            <person name="Lawlor S."/>
            <person name="Leongamornlert D.A."/>
            <person name="Leversha M."/>
            <person name="Lloyd C.R."/>
            <person name="Lloyd D.M."/>
            <person name="Loveland J.E."/>
            <person name="Lovell J."/>
            <person name="Martin S."/>
            <person name="Mashreghi-Mohammadi M."/>
            <person name="Maslen G.L."/>
            <person name="Matthews L."/>
            <person name="McCann O.T."/>
            <person name="McLaren S.J."/>
            <person name="McLay K."/>
            <person name="McMurray A."/>
            <person name="Moore M.J.F."/>
            <person name="Mullikin J.C."/>
            <person name="Niblett D."/>
            <person name="Nickerson T."/>
            <person name="Novik K.L."/>
            <person name="Oliver K."/>
            <person name="Overton-Larty E.K."/>
            <person name="Parker A."/>
            <person name="Patel R."/>
            <person name="Pearce A.V."/>
            <person name="Peck A.I."/>
            <person name="Phillimore B.J.C.T."/>
            <person name="Phillips S."/>
            <person name="Plumb R.W."/>
            <person name="Porter K.M."/>
            <person name="Ramsey Y."/>
            <person name="Ranby S.A."/>
            <person name="Rice C.M."/>
            <person name="Ross M.T."/>
            <person name="Searle S.M."/>
            <person name="Sehra H.K."/>
            <person name="Sheridan E."/>
            <person name="Skuce C.D."/>
            <person name="Smith S."/>
            <person name="Smith M."/>
            <person name="Spraggon L."/>
            <person name="Squares S.L."/>
            <person name="Steward C.A."/>
            <person name="Sycamore N."/>
            <person name="Tamlyn-Hall G."/>
            <person name="Tester J."/>
            <person name="Theaker A.J."/>
            <person name="Thomas D.W."/>
            <person name="Thorpe A."/>
            <person name="Tracey A."/>
            <person name="Tromans A."/>
            <person name="Tubby B."/>
            <person name="Wall M."/>
            <person name="Wallis J.M."/>
            <person name="West A.P."/>
            <person name="White S.S."/>
            <person name="Whitehead S.L."/>
            <person name="Whittaker H."/>
            <person name="Wild A."/>
            <person name="Willey D.J."/>
            <person name="Wilmer T.E."/>
            <person name="Wood J.M."/>
            <person name="Wray P.W."/>
            <person name="Wyatt J.C."/>
            <person name="Young L."/>
            <person name="Younger R.M."/>
            <person name="Bentley D.R."/>
            <person name="Coulson A."/>
            <person name="Durbin R.M."/>
            <person name="Hubbard T."/>
            <person name="Sulston J.E."/>
            <person name="Dunham I."/>
            <person name="Rogers J."/>
            <person name="Beck S."/>
        </authorList>
    </citation>
    <scope>NUCLEOTIDE SEQUENCE [LARGE SCALE GENOMIC DNA]</scope>
</reference>
<feature type="chain" id="PRO_0000292039" description="POM121-like protein 2">
    <location>
        <begin position="1"/>
        <end position="1035"/>
    </location>
</feature>
<feature type="region of interest" description="Disordered" evidence="1">
    <location>
        <begin position="1"/>
        <end position="37"/>
    </location>
</feature>
<feature type="region of interest" description="Disordered" evidence="1">
    <location>
        <begin position="177"/>
        <end position="213"/>
    </location>
</feature>
<feature type="region of interest" description="Disordered" evidence="1">
    <location>
        <begin position="286"/>
        <end position="343"/>
    </location>
</feature>
<feature type="region of interest" description="Disordered" evidence="1">
    <location>
        <begin position="415"/>
        <end position="508"/>
    </location>
</feature>
<feature type="region of interest" description="Disordered" evidence="1">
    <location>
        <begin position="754"/>
        <end position="791"/>
    </location>
</feature>
<feature type="region of interest" description="Disordered" evidence="1">
    <location>
        <begin position="972"/>
        <end position="1035"/>
    </location>
</feature>
<feature type="compositionally biased region" description="Basic residues" evidence="1">
    <location>
        <begin position="27"/>
        <end position="37"/>
    </location>
</feature>
<feature type="compositionally biased region" description="Low complexity" evidence="1">
    <location>
        <begin position="309"/>
        <end position="319"/>
    </location>
</feature>
<feature type="compositionally biased region" description="Polar residues" evidence="1">
    <location>
        <begin position="320"/>
        <end position="330"/>
    </location>
</feature>
<feature type="compositionally biased region" description="Polar residues" evidence="1">
    <location>
        <begin position="420"/>
        <end position="431"/>
    </location>
</feature>
<feature type="compositionally biased region" description="Polar residues" evidence="1">
    <location>
        <begin position="445"/>
        <end position="462"/>
    </location>
</feature>
<feature type="compositionally biased region" description="Low complexity" evidence="1">
    <location>
        <begin position="464"/>
        <end position="481"/>
    </location>
</feature>
<feature type="compositionally biased region" description="Pro residues" evidence="1">
    <location>
        <begin position="493"/>
        <end position="502"/>
    </location>
</feature>
<feature type="compositionally biased region" description="Low complexity" evidence="1">
    <location>
        <begin position="1000"/>
        <end position="1016"/>
    </location>
</feature>
<feature type="compositionally biased region" description="Basic residues" evidence="1">
    <location>
        <begin position="1017"/>
        <end position="1035"/>
    </location>
</feature>
<sequence>MGSFLSKLELSPSSPAQVRTDLPERPTKRRPPQPLHQVHRVQFVHRAHPAPRYRPVRRRPNLDPANPTTWLANEAWRRFPMKKSQNSPLGPLPSDWWESYLKRTIWSLRHPRPIWSPVTIRITPPDQRVPPSTSPEDVIALAGLPPSEELADPCSKETVLRALRECRKGKGRLEEPLFPESLDSKRRSPETRPSAFKPLMKNGTLTSFVPRPGPLKRSLHSWGSDHSLTKRPNCSSMSSLASIYRGGTLSSKRNAIGSSYSSCRNFSDPWKRSVPSVSFETPEWPIKKEKSCHRPSSPVPLVSDFESLGGSESSGQQNQKIPQLPSSPENLVSEIPPPQLGYAVSDENLTLGKKAELQVSNNAGEDTTEVNTDPFPETWLAIQPSLSLALPSSETDLTQGANPQLENLRKMQKSLGPLASPQSTGEATSVAHSPLKTPSLPTPPGCSQSELLPGTSPDSKPTATFILLTPTSPTLPVTDTTWPPSTSQADRSPMPPDPPAPPTIQSTLLGMVSSPTSHLSASAPPDATSAHLMLKPILGPLHNSEIGSSSYSRISVTAAASSISSLSTIQGTLTPTFKPIFGSIDPLKTTPMIAPFSSKQTPPPFTHASTHHFHGLVKATSVVMSTTLASTSKDSVFKPPLDFGVVNVTSAVGNTYSVPSTCDTFLLGTAQAFRADFTPATGFIFPPHHHPTIPTVHTVTMFTQVLSSVVQISPRSSTANFRGMGSPLPASALVSTNWLASTPSISNLTPAITSPLGSSSRPPFPLSQGANPQPAFGATNGQKQGPSQPALMPSVSSSFLFGSSAVALPTPMPTPAQPAFISTTQSALGCLTPSASTSQTPASTWSGIGGIPAGFPISQASTTGFRIVIQTHQSGAFGSVFGSRAPQPFTFGGFVTPMDCDESGIIMTGPDMSPTSGAFSIGALPSGTTNTMIPFGKGWSQNTEGLPSHRTAFSLGRGSISARKTMAPIAQNTPVPGQAKAGSSVGFGMPFPPAQGSVGRGPFRSSASSFSIGAKSKTPKNREKGHSRRHHAYKK</sequence>
<name>P12L2_HUMAN</name>
<gene>
    <name type="primary">POM121L2</name>
    <name type="synonym">POM121L</name>
</gene>
<comment type="similarity">
    <text evidence="2">Belongs to the POM121 family.</text>
</comment>
<comment type="caution">
    <text evidence="2">This sequence lacks full-length transcript support.</text>
</comment>